<accession>Q664S8</accession>
<name>RL16_YERPS</name>
<evidence type="ECO:0000255" key="1">
    <source>
        <dbReference type="HAMAP-Rule" id="MF_01342"/>
    </source>
</evidence>
<evidence type="ECO:0000305" key="2"/>
<reference key="1">
    <citation type="journal article" date="2004" name="Proc. Natl. Acad. Sci. U.S.A.">
        <title>Insights into the evolution of Yersinia pestis through whole-genome comparison with Yersinia pseudotuberculosis.</title>
        <authorList>
            <person name="Chain P.S.G."/>
            <person name="Carniel E."/>
            <person name="Larimer F.W."/>
            <person name="Lamerdin J."/>
            <person name="Stoutland P.O."/>
            <person name="Regala W.M."/>
            <person name="Georgescu A.M."/>
            <person name="Vergez L.M."/>
            <person name="Land M.L."/>
            <person name="Motin V.L."/>
            <person name="Brubaker R.R."/>
            <person name="Fowler J."/>
            <person name="Hinnebusch J."/>
            <person name="Marceau M."/>
            <person name="Medigue C."/>
            <person name="Simonet M."/>
            <person name="Chenal-Francisque V."/>
            <person name="Souza B."/>
            <person name="Dacheux D."/>
            <person name="Elliott J.M."/>
            <person name="Derbise A."/>
            <person name="Hauser L.J."/>
            <person name="Garcia E."/>
        </authorList>
    </citation>
    <scope>NUCLEOTIDE SEQUENCE [LARGE SCALE GENOMIC DNA]</scope>
    <source>
        <strain>IP32953</strain>
    </source>
</reference>
<proteinExistence type="inferred from homology"/>
<dbReference type="EMBL" id="BX936398">
    <property type="protein sequence ID" value="CAH22929.1"/>
    <property type="molecule type" value="Genomic_DNA"/>
</dbReference>
<dbReference type="RefSeq" id="WP_002218940.1">
    <property type="nucleotide sequence ID" value="NZ_CP009712.1"/>
</dbReference>
<dbReference type="SMR" id="Q664S8"/>
<dbReference type="GeneID" id="97454238"/>
<dbReference type="KEGG" id="ypo:BZ17_2896"/>
<dbReference type="KEGG" id="yps:YPTB3691"/>
<dbReference type="PATRIC" id="fig|273123.14.peg.3037"/>
<dbReference type="Proteomes" id="UP000001011">
    <property type="component" value="Chromosome"/>
</dbReference>
<dbReference type="GO" id="GO:0022625">
    <property type="term" value="C:cytosolic large ribosomal subunit"/>
    <property type="evidence" value="ECO:0007669"/>
    <property type="project" value="TreeGrafter"/>
</dbReference>
<dbReference type="GO" id="GO:0019843">
    <property type="term" value="F:rRNA binding"/>
    <property type="evidence" value="ECO:0007669"/>
    <property type="project" value="UniProtKB-UniRule"/>
</dbReference>
<dbReference type="GO" id="GO:0003735">
    <property type="term" value="F:structural constituent of ribosome"/>
    <property type="evidence" value="ECO:0007669"/>
    <property type="project" value="InterPro"/>
</dbReference>
<dbReference type="GO" id="GO:0000049">
    <property type="term" value="F:tRNA binding"/>
    <property type="evidence" value="ECO:0007669"/>
    <property type="project" value="UniProtKB-KW"/>
</dbReference>
<dbReference type="GO" id="GO:0006412">
    <property type="term" value="P:translation"/>
    <property type="evidence" value="ECO:0007669"/>
    <property type="project" value="UniProtKB-UniRule"/>
</dbReference>
<dbReference type="CDD" id="cd01433">
    <property type="entry name" value="Ribosomal_L16_L10e"/>
    <property type="match status" value="1"/>
</dbReference>
<dbReference type="FunFam" id="3.90.1170.10:FF:000001">
    <property type="entry name" value="50S ribosomal protein L16"/>
    <property type="match status" value="1"/>
</dbReference>
<dbReference type="Gene3D" id="3.90.1170.10">
    <property type="entry name" value="Ribosomal protein L10e/L16"/>
    <property type="match status" value="1"/>
</dbReference>
<dbReference type="HAMAP" id="MF_01342">
    <property type="entry name" value="Ribosomal_uL16"/>
    <property type="match status" value="1"/>
</dbReference>
<dbReference type="InterPro" id="IPR047873">
    <property type="entry name" value="Ribosomal_uL16"/>
</dbReference>
<dbReference type="InterPro" id="IPR000114">
    <property type="entry name" value="Ribosomal_uL16_bact-type"/>
</dbReference>
<dbReference type="InterPro" id="IPR020798">
    <property type="entry name" value="Ribosomal_uL16_CS"/>
</dbReference>
<dbReference type="InterPro" id="IPR016180">
    <property type="entry name" value="Ribosomal_uL16_dom"/>
</dbReference>
<dbReference type="InterPro" id="IPR036920">
    <property type="entry name" value="Ribosomal_uL16_sf"/>
</dbReference>
<dbReference type="NCBIfam" id="TIGR01164">
    <property type="entry name" value="rplP_bact"/>
    <property type="match status" value="1"/>
</dbReference>
<dbReference type="PANTHER" id="PTHR12220">
    <property type="entry name" value="50S/60S RIBOSOMAL PROTEIN L16"/>
    <property type="match status" value="1"/>
</dbReference>
<dbReference type="PANTHER" id="PTHR12220:SF13">
    <property type="entry name" value="LARGE RIBOSOMAL SUBUNIT PROTEIN UL16M"/>
    <property type="match status" value="1"/>
</dbReference>
<dbReference type="Pfam" id="PF00252">
    <property type="entry name" value="Ribosomal_L16"/>
    <property type="match status" value="1"/>
</dbReference>
<dbReference type="PRINTS" id="PR00060">
    <property type="entry name" value="RIBOSOMALL16"/>
</dbReference>
<dbReference type="SUPFAM" id="SSF54686">
    <property type="entry name" value="Ribosomal protein L16p/L10e"/>
    <property type="match status" value="1"/>
</dbReference>
<dbReference type="PROSITE" id="PS00586">
    <property type="entry name" value="RIBOSOMAL_L16_1"/>
    <property type="match status" value="1"/>
</dbReference>
<dbReference type="PROSITE" id="PS00701">
    <property type="entry name" value="RIBOSOMAL_L16_2"/>
    <property type="match status" value="1"/>
</dbReference>
<gene>
    <name evidence="1" type="primary">rplP</name>
    <name type="ordered locus">YPTB3691</name>
</gene>
<keyword id="KW-0687">Ribonucleoprotein</keyword>
<keyword id="KW-0689">Ribosomal protein</keyword>
<keyword id="KW-0694">RNA-binding</keyword>
<keyword id="KW-0699">rRNA-binding</keyword>
<keyword id="KW-0820">tRNA-binding</keyword>
<protein>
    <recommendedName>
        <fullName evidence="1">Large ribosomal subunit protein uL16</fullName>
    </recommendedName>
    <alternativeName>
        <fullName evidence="2">50S ribosomal protein L16</fullName>
    </alternativeName>
</protein>
<feature type="chain" id="PRO_0000062261" description="Large ribosomal subunit protein uL16">
    <location>
        <begin position="1"/>
        <end position="136"/>
    </location>
</feature>
<sequence>MLQPKRTKFRKMHKGRNRGLAQGTDVSFGEFGLKACGRCRLTARQIEAARRAMTRAIKRQGKVWIRVFPDKPITEKPLEVRMGKGKGNVEYWVALIQPGKVLFEMAGVPEETAREAFKLAAAKLPVGTTFVTKTVM</sequence>
<organism>
    <name type="scientific">Yersinia pseudotuberculosis serotype I (strain IP32953)</name>
    <dbReference type="NCBI Taxonomy" id="273123"/>
    <lineage>
        <taxon>Bacteria</taxon>
        <taxon>Pseudomonadati</taxon>
        <taxon>Pseudomonadota</taxon>
        <taxon>Gammaproteobacteria</taxon>
        <taxon>Enterobacterales</taxon>
        <taxon>Yersiniaceae</taxon>
        <taxon>Yersinia</taxon>
    </lineage>
</organism>
<comment type="function">
    <text evidence="1">Binds 23S rRNA and is also seen to make contacts with the A and possibly P site tRNAs.</text>
</comment>
<comment type="subunit">
    <text evidence="1">Part of the 50S ribosomal subunit.</text>
</comment>
<comment type="similarity">
    <text evidence="1">Belongs to the universal ribosomal protein uL16 family.</text>
</comment>